<comment type="function">
    <text evidence="1">Converts 1-acyl-sn-glycerol-3-phosphate (lysophosphatidic acid or LPA) into 1,2-diacyl-sn-glycerol-3-phosphate (phosphatidic acid or PA) by incorporating an acyl moiety at the sn-2 position of the glycerol backbone (By similarity). Exhibits high acyl-CoA specificity for polyunsaturated fatty acyl-CoA, especially docosahexaenoyl-CoA (22:6-CoA, DHA-CoA) (By similarity).</text>
</comment>
<comment type="catalytic activity">
    <reaction evidence="1">
        <text>a 1-acyl-sn-glycero-3-phosphate + an acyl-CoA = a 1,2-diacyl-sn-glycero-3-phosphate + CoA</text>
        <dbReference type="Rhea" id="RHEA:19709"/>
        <dbReference type="ChEBI" id="CHEBI:57287"/>
        <dbReference type="ChEBI" id="CHEBI:57970"/>
        <dbReference type="ChEBI" id="CHEBI:58342"/>
        <dbReference type="ChEBI" id="CHEBI:58608"/>
        <dbReference type="EC" id="2.3.1.51"/>
    </reaction>
    <physiologicalReaction direction="left-to-right" evidence="1">
        <dbReference type="Rhea" id="RHEA:19710"/>
    </physiologicalReaction>
</comment>
<comment type="catalytic activity">
    <reaction evidence="1">
        <text>(4Z,7Z,10Z,13Z,16Z,19Z)-docosahexaenoyl-CoA + 1-hexadecanoyl-sn-glycero-3-phosphate = 1-hexadecanoyl-2-(4Z,7Z,10Z,13Z,16Z,19Z-docosahexaenoyl)-sn-glycero-3-phosphate + CoA</text>
        <dbReference type="Rhea" id="RHEA:55300"/>
        <dbReference type="ChEBI" id="CHEBI:57287"/>
        <dbReference type="ChEBI" id="CHEBI:57518"/>
        <dbReference type="ChEBI" id="CHEBI:74298"/>
        <dbReference type="ChEBI" id="CHEBI:82928"/>
    </reaction>
    <physiologicalReaction direction="left-to-right" evidence="1">
        <dbReference type="Rhea" id="RHEA:55301"/>
    </physiologicalReaction>
</comment>
<comment type="catalytic activity">
    <reaction evidence="1">
        <text>1-octadecanoyl-sn-glycero-3-phosphate + (9Z,12Z)-octadecadienoyl-CoA = 1-octadecanoyl-2-(9Z,12Z-octadecadienoyl)-sn-glycero-3-phosphate + CoA</text>
        <dbReference type="Rhea" id="RHEA:55304"/>
        <dbReference type="ChEBI" id="CHEBI:57287"/>
        <dbReference type="ChEBI" id="CHEBI:57383"/>
        <dbReference type="ChEBI" id="CHEBI:74565"/>
        <dbReference type="ChEBI" id="CHEBI:77098"/>
    </reaction>
    <physiologicalReaction direction="left-to-right" evidence="1">
        <dbReference type="Rhea" id="RHEA:55305"/>
    </physiologicalReaction>
</comment>
<comment type="catalytic activity">
    <reaction evidence="1">
        <text>1-octadecanoyl-sn-glycero-3-phosphate + (4Z,7Z,10Z,13Z,16Z,19Z)-docosahexaenoyl-CoA = 1-octadecanoyl-2-(4Z,7Z,10Z,13Z,16Z,19Z-docosahexaenoyl)-sn-glycero-3-phosphate + CoA</text>
        <dbReference type="Rhea" id="RHEA:55308"/>
        <dbReference type="ChEBI" id="CHEBI:57287"/>
        <dbReference type="ChEBI" id="CHEBI:74298"/>
        <dbReference type="ChEBI" id="CHEBI:74565"/>
        <dbReference type="ChEBI" id="CHEBI:77130"/>
    </reaction>
    <physiologicalReaction direction="left-to-right" evidence="1">
        <dbReference type="Rhea" id="RHEA:55309"/>
    </physiologicalReaction>
</comment>
<comment type="catalytic activity">
    <reaction evidence="1">
        <text>(4Z,7Z,10Z,13Z,16Z,19Z)-docosahexaenoyl-CoA + 1-(9Z-octadecenoyl)-sn-glycero-3-phosphate = 1-(9Z-octadecenoyl)-2-(4Z,7Z,10Z,13Z,16Z,19Z-docosahexaenoyl)-sn-glycero-3-phosphate + CoA</text>
        <dbReference type="Rhea" id="RHEA:55312"/>
        <dbReference type="ChEBI" id="CHEBI:57287"/>
        <dbReference type="ChEBI" id="CHEBI:74298"/>
        <dbReference type="ChEBI" id="CHEBI:74544"/>
        <dbReference type="ChEBI" id="CHEBI:138723"/>
    </reaction>
    <physiologicalReaction direction="left-to-right" evidence="1">
        <dbReference type="Rhea" id="RHEA:55313"/>
    </physiologicalReaction>
</comment>
<comment type="pathway">
    <text>Phospholipid metabolism; CDP-diacylglycerol biosynthesis; CDP-diacylglycerol from sn-glycerol 3-phosphate: step 2/3.</text>
</comment>
<comment type="subcellular location">
    <subcellularLocation>
        <location evidence="1">Endoplasmic reticulum membrane</location>
        <topology evidence="3">Multi-pass membrane protein</topology>
    </subcellularLocation>
</comment>
<comment type="domain">
    <text evidence="2">The HXXXXD motif is essential for acyltransferase activity and may constitute the binding site for the phosphate moiety of the glycerol-3-phosphate.</text>
</comment>
<comment type="similarity">
    <text evidence="4">Belongs to the 1-acyl-sn-glycerol-3-phosphate acyltransferase family.</text>
</comment>
<sequence>MDLIGLLKSQFLCHLVFCYVFIASGLIVNAIQLCTLVIWPINKQLFRKINARLCYCVSSQLVMLLEWWSGTECTIYTDPKASPHYGKENAIVVLNHKFEIDFLCGWSLAERLGILGNSKVLAKKELAYVPIIGWMWYFVEMIFCTRKWEQDRQTVAKSLLHLRDYPEKYLFLIHCEGTRFTEKKHQISMQVAQAKGLPSLKHHLLPRTKGFAITVKCLRDVVPAVYDCTLNFRNNENPTLLGVLNGKKYHADCYVRRIPMEDIPEDEDKCSAWLHKLYQEKDAFQEEYYRTGVFPETPWVPPRRPWSLVNWLFWASLLLYPFFQFLVSMVSSGSSVTLASLVLIFCMASMGVRWMIGVTEIDKGSAYGNIDNKRKQTD</sequence>
<dbReference type="EC" id="2.3.1.51" evidence="1"/>
<dbReference type="EMBL" id="AB067572">
    <property type="protein sequence ID" value="BAB62290.1"/>
    <property type="molecule type" value="mRNA"/>
</dbReference>
<dbReference type="EMBL" id="BC086992">
    <property type="protein sequence ID" value="AAH86992.1"/>
    <property type="molecule type" value="mRNA"/>
</dbReference>
<dbReference type="RefSeq" id="NP_596897.1">
    <property type="nucleotide sequence ID" value="NM_133406.2"/>
</dbReference>
<dbReference type="RefSeq" id="XP_006227919.1">
    <property type="nucleotide sequence ID" value="XM_006227857.5"/>
</dbReference>
<dbReference type="FunCoup" id="Q924S1">
    <property type="interactions" value="1458"/>
</dbReference>
<dbReference type="STRING" id="10116.ENSRNOP00000069883"/>
<dbReference type="PhosphoSitePlus" id="Q924S1"/>
<dbReference type="PaxDb" id="10116-ENSRNOP00000024213"/>
<dbReference type="Ensembl" id="ENSRNOT00000024213.5">
    <property type="protein sequence ID" value="ENSRNOP00000024213.2"/>
    <property type="gene ID" value="ENSRNOG00000017731.5"/>
</dbReference>
<dbReference type="GeneID" id="170919"/>
<dbReference type="KEGG" id="rno:170919"/>
<dbReference type="AGR" id="RGD:619916"/>
<dbReference type="CTD" id="56895"/>
<dbReference type="RGD" id="619916">
    <property type="gene designation" value="Agpat4"/>
</dbReference>
<dbReference type="eggNOG" id="KOG1505">
    <property type="taxonomic scope" value="Eukaryota"/>
</dbReference>
<dbReference type="GeneTree" id="ENSGT00950000182836"/>
<dbReference type="InParanoid" id="Q924S1"/>
<dbReference type="OrthoDB" id="189226at2759"/>
<dbReference type="PhylomeDB" id="Q924S1"/>
<dbReference type="TreeFam" id="TF314065"/>
<dbReference type="Reactome" id="R-RNO-1483166">
    <property type="pathway name" value="Synthesis of PA"/>
</dbReference>
<dbReference type="UniPathway" id="UPA00557">
    <property type="reaction ID" value="UER00613"/>
</dbReference>
<dbReference type="PRO" id="PR:Q924S1"/>
<dbReference type="Proteomes" id="UP000002494">
    <property type="component" value="Chromosome 1"/>
</dbReference>
<dbReference type="Bgee" id="ENSRNOG00000017731">
    <property type="expression patterns" value="Expressed in cerebellum and 20 other cell types or tissues"/>
</dbReference>
<dbReference type="ExpressionAtlas" id="Q924S1">
    <property type="expression patterns" value="baseline and differential"/>
</dbReference>
<dbReference type="GO" id="GO:0012505">
    <property type="term" value="C:endomembrane system"/>
    <property type="evidence" value="ECO:0000318"/>
    <property type="project" value="GO_Central"/>
</dbReference>
<dbReference type="GO" id="GO:0005783">
    <property type="term" value="C:endoplasmic reticulum"/>
    <property type="evidence" value="ECO:0000250"/>
    <property type="project" value="UniProtKB"/>
</dbReference>
<dbReference type="GO" id="GO:0005789">
    <property type="term" value="C:endoplasmic reticulum membrane"/>
    <property type="evidence" value="ECO:0007669"/>
    <property type="project" value="UniProtKB-SubCell"/>
</dbReference>
<dbReference type="GO" id="GO:0005741">
    <property type="term" value="C:mitochondrial outer membrane"/>
    <property type="evidence" value="ECO:0000266"/>
    <property type="project" value="RGD"/>
</dbReference>
<dbReference type="GO" id="GO:0003841">
    <property type="term" value="F:1-acylglycerol-3-phosphate O-acyltransferase activity"/>
    <property type="evidence" value="ECO:0000250"/>
    <property type="project" value="UniProtKB"/>
</dbReference>
<dbReference type="GO" id="GO:0042171">
    <property type="term" value="F:lysophosphatidic acid acyltransferase activity"/>
    <property type="evidence" value="ECO:0000266"/>
    <property type="project" value="RGD"/>
</dbReference>
<dbReference type="GO" id="GO:0016024">
    <property type="term" value="P:CDP-diacylglycerol biosynthetic process"/>
    <property type="evidence" value="ECO:0007669"/>
    <property type="project" value="UniProtKB-UniPathway"/>
</dbReference>
<dbReference type="GO" id="GO:0006644">
    <property type="term" value="P:phospholipid metabolic process"/>
    <property type="evidence" value="ECO:0000266"/>
    <property type="project" value="RGD"/>
</dbReference>
<dbReference type="CDD" id="cd07990">
    <property type="entry name" value="LPLAT_LCLAT1-like"/>
    <property type="match status" value="1"/>
</dbReference>
<dbReference type="InterPro" id="IPR032098">
    <property type="entry name" value="Acyltransf_C"/>
</dbReference>
<dbReference type="InterPro" id="IPR002123">
    <property type="entry name" value="Plipid/glycerol_acylTrfase"/>
</dbReference>
<dbReference type="PANTHER" id="PTHR10983:SF8">
    <property type="entry name" value="1-ACYL-SN-GLYCEROL-3-PHOSPHATE ACYLTRANSFERASE DELTA"/>
    <property type="match status" value="1"/>
</dbReference>
<dbReference type="PANTHER" id="PTHR10983">
    <property type="entry name" value="1-ACYLGLYCEROL-3-PHOSPHATE ACYLTRANSFERASE-RELATED"/>
    <property type="match status" value="1"/>
</dbReference>
<dbReference type="Pfam" id="PF16076">
    <property type="entry name" value="Acyltransf_C"/>
    <property type="match status" value="1"/>
</dbReference>
<dbReference type="Pfam" id="PF01553">
    <property type="entry name" value="Acyltransferase"/>
    <property type="match status" value="1"/>
</dbReference>
<dbReference type="SMART" id="SM00563">
    <property type="entry name" value="PlsC"/>
    <property type="match status" value="1"/>
</dbReference>
<dbReference type="SUPFAM" id="SSF69593">
    <property type="entry name" value="Glycerol-3-phosphate (1)-acyltransferase"/>
    <property type="match status" value="1"/>
</dbReference>
<accession>Q924S1</accession>
<name>PLCD_RAT</name>
<protein>
    <recommendedName>
        <fullName>1-acyl-sn-glycerol-3-phosphate acyltransferase delta</fullName>
        <ecNumber evidence="1">2.3.1.51</ecNumber>
    </recommendedName>
    <alternativeName>
        <fullName>1-acylglycerol-3-phosphate O-acyltransferase 4</fullName>
        <shortName>1-AGP acyltransferase 4</shortName>
        <shortName>1-AGPAT 4</shortName>
    </alternativeName>
    <alternativeName>
        <fullName>Lysophosphatidic acid acyltransferase delta</fullName>
        <shortName>LPAAT-delta</shortName>
    </alternativeName>
</protein>
<proteinExistence type="evidence at transcript level"/>
<organism>
    <name type="scientific">Rattus norvegicus</name>
    <name type="common">Rat</name>
    <dbReference type="NCBI Taxonomy" id="10116"/>
    <lineage>
        <taxon>Eukaryota</taxon>
        <taxon>Metazoa</taxon>
        <taxon>Chordata</taxon>
        <taxon>Craniata</taxon>
        <taxon>Vertebrata</taxon>
        <taxon>Euteleostomi</taxon>
        <taxon>Mammalia</taxon>
        <taxon>Eutheria</taxon>
        <taxon>Euarchontoglires</taxon>
        <taxon>Glires</taxon>
        <taxon>Rodentia</taxon>
        <taxon>Myomorpha</taxon>
        <taxon>Muroidea</taxon>
        <taxon>Muridae</taxon>
        <taxon>Murinae</taxon>
        <taxon>Rattus</taxon>
    </lineage>
</organism>
<reference key="1">
    <citation type="submission" date="2001-07" db="EMBL/GenBank/DDBJ databases">
        <title>Rattus norvegicus mRNA for lysophosphatidic acid acyltransferase-delta, complete cds.</title>
        <authorList>
            <person name="Li W."/>
            <person name="Suzuki T."/>
        </authorList>
    </citation>
    <scope>NUCLEOTIDE SEQUENCE [MRNA]</scope>
</reference>
<reference key="2">
    <citation type="journal article" date="2004" name="Genome Res.">
        <title>The status, quality, and expansion of the NIH full-length cDNA project: the Mammalian Gene Collection (MGC).</title>
        <authorList>
            <consortium name="The MGC Project Team"/>
        </authorList>
    </citation>
    <scope>NUCLEOTIDE SEQUENCE [LARGE SCALE MRNA]</scope>
    <source>
        <tissue>Heart</tissue>
    </source>
</reference>
<feature type="chain" id="PRO_0000208199" description="1-acyl-sn-glycerol-3-phosphate acyltransferase delta">
    <location>
        <begin position="1"/>
        <end position="378"/>
    </location>
</feature>
<feature type="transmembrane region" description="Helical" evidence="3">
    <location>
        <begin position="11"/>
        <end position="31"/>
    </location>
</feature>
<feature type="transmembrane region" description="Helical" evidence="3">
    <location>
        <begin position="125"/>
        <end position="145"/>
    </location>
</feature>
<feature type="transmembrane region" description="Helical" evidence="3">
    <location>
        <begin position="311"/>
        <end position="331"/>
    </location>
</feature>
<feature type="transmembrane region" description="Helical" evidence="3">
    <location>
        <begin position="338"/>
        <end position="358"/>
    </location>
</feature>
<feature type="short sequence motif" description="HXXXXD motif" evidence="2">
    <location>
        <begin position="96"/>
        <end position="101"/>
    </location>
</feature>
<evidence type="ECO:0000250" key="1">
    <source>
        <dbReference type="UniProtKB" id="Q8K4X7"/>
    </source>
</evidence>
<evidence type="ECO:0000250" key="2">
    <source>
        <dbReference type="UniProtKB" id="Q9D517"/>
    </source>
</evidence>
<evidence type="ECO:0000255" key="3"/>
<evidence type="ECO:0000305" key="4"/>
<gene>
    <name type="primary">Agpat4</name>
</gene>
<keyword id="KW-0012">Acyltransferase</keyword>
<keyword id="KW-0256">Endoplasmic reticulum</keyword>
<keyword id="KW-0444">Lipid biosynthesis</keyword>
<keyword id="KW-0443">Lipid metabolism</keyword>
<keyword id="KW-0472">Membrane</keyword>
<keyword id="KW-0594">Phospholipid biosynthesis</keyword>
<keyword id="KW-1208">Phospholipid metabolism</keyword>
<keyword id="KW-1185">Reference proteome</keyword>
<keyword id="KW-0808">Transferase</keyword>
<keyword id="KW-0812">Transmembrane</keyword>
<keyword id="KW-1133">Transmembrane helix</keyword>